<feature type="signal peptide" evidence="3">
    <location>
        <begin position="1"/>
        <end position="20"/>
    </location>
</feature>
<feature type="chain" id="PRO_0000395553" description="Fructan 1-exohydrolase w3" evidence="3">
    <location>
        <begin position="21"/>
        <end position="596"/>
    </location>
</feature>
<feature type="active site" evidence="1">
    <location>
        <position position="75"/>
    </location>
</feature>
<feature type="glycosylation site" description="N-linked (GlcNAc...) asparagine" evidence="3">
    <location>
        <position position="168"/>
    </location>
</feature>
<feature type="glycosylation site" description="N-linked (GlcNAc...) asparagine" evidence="3">
    <location>
        <position position="236"/>
    </location>
</feature>
<feature type="glycosylation site" description="N-linked (GlcNAc...) asparagine" evidence="3">
    <location>
        <position position="248"/>
    </location>
</feature>
<feature type="disulfide bond" evidence="1">
    <location>
        <begin position="446"/>
        <end position="492"/>
    </location>
</feature>
<feature type="sequence conflict" description="In Ref. 2; CAD92365." evidence="8" ref="2">
    <original>A</original>
    <variation>V</variation>
    <location>
        <position position="113"/>
    </location>
</feature>
<feature type="sequence conflict" description="In Ref. 2; CAD92365." evidence="8" ref="2">
    <original>P</original>
    <variation>S</variation>
    <location>
        <position position="334"/>
    </location>
</feature>
<feature type="sequence conflict" description="In Ref. 2; CAD92365." evidence="8" ref="2">
    <original>G</original>
    <variation>S</variation>
    <location>
        <position position="569"/>
    </location>
</feature>
<proteinExistence type="evidence at protein level"/>
<keyword id="KW-1015">Disulfide bond</keyword>
<keyword id="KW-0325">Glycoprotein</keyword>
<keyword id="KW-0326">Glycosidase</keyword>
<keyword id="KW-0378">Hydrolase</keyword>
<keyword id="KW-1185">Reference proteome</keyword>
<keyword id="KW-0732">Signal</keyword>
<name>1FEH3_WHEAT</name>
<comment type="function">
    <text evidence="2 4">Hydrolyzes inulin-type beta-(2,1)-fructans and beta-(2,1)-linkages in branched fructans. Has low activity against beta-(2,6)-linked fructans. May play a role as a beta-(2,1)-trimmer during graminan biosynthesis.</text>
</comment>
<comment type="catalytic activity">
    <reaction evidence="4">
        <text>Hydrolysis of terminal, non-reducing (2-&gt;1)-linked beta-D-fructofuranose residues in fructans.</text>
        <dbReference type="EC" id="3.2.1.153"/>
    </reaction>
</comment>
<comment type="activity regulation">
    <text evidence="4">Inhibited by sucrose.</text>
</comment>
<comment type="biophysicochemical properties">
    <phDependence>
        <text evidence="4">Optimum pH is 5-6.</text>
    </phDependence>
    <temperatureDependence>
        <text evidence="4">Optimum temperature is 25-40 degrees Celsius.</text>
    </temperatureDependence>
</comment>
<comment type="tissue specificity">
    <text evidence="4">Expressed in the stem, particularly the penultimate internode. Little expression is detected in roots and in the peduncle part of the stem.</text>
</comment>
<comment type="similarity">
    <text evidence="3">Belongs to the glycosyl hydrolase 32 family.</text>
</comment>
<dbReference type="EC" id="3.2.1.153"/>
<dbReference type="EMBL" id="FJ184990">
    <property type="protein sequence ID" value="ACI16116.1"/>
    <property type="molecule type" value="Genomic_DNA"/>
</dbReference>
<dbReference type="EMBL" id="AJ564996">
    <property type="protein sequence ID" value="CAD92365.1"/>
    <property type="molecule type" value="mRNA"/>
</dbReference>
<dbReference type="SMR" id="B6DZC8"/>
<dbReference type="STRING" id="4565.B6DZC8"/>
<dbReference type="CAZy" id="GH32">
    <property type="family name" value="Glycoside Hydrolase Family 32"/>
</dbReference>
<dbReference type="GlyCosmos" id="B6DZC8">
    <property type="glycosylation" value="3 sites, No reported glycans"/>
</dbReference>
<dbReference type="Proteomes" id="UP000019116">
    <property type="component" value="Unplaced"/>
</dbReference>
<dbReference type="ExpressionAtlas" id="B6DZC8">
    <property type="expression patterns" value="baseline and differential"/>
</dbReference>
<dbReference type="GO" id="GO:0033948">
    <property type="term" value="F:fructan beta-(2,1)-fructosidase activity"/>
    <property type="evidence" value="ECO:0007669"/>
    <property type="project" value="UniProtKB-EC"/>
</dbReference>
<dbReference type="GO" id="GO:0005975">
    <property type="term" value="P:carbohydrate metabolic process"/>
    <property type="evidence" value="ECO:0007669"/>
    <property type="project" value="InterPro"/>
</dbReference>
<dbReference type="CDD" id="cd18624">
    <property type="entry name" value="GH32_Fruct1-like"/>
    <property type="match status" value="1"/>
</dbReference>
<dbReference type="FunFam" id="2.115.10.20:FF:000001">
    <property type="entry name" value="Beta-fructofuranosidase, insoluble isoenzyme CWINV1"/>
    <property type="match status" value="1"/>
</dbReference>
<dbReference type="FunFam" id="2.60.120.560:FF:000002">
    <property type="entry name" value="Beta-fructofuranosidase, insoluble isoenzyme CWINV1"/>
    <property type="match status" value="1"/>
</dbReference>
<dbReference type="Gene3D" id="2.60.120.560">
    <property type="entry name" value="Exo-inulinase, domain 1"/>
    <property type="match status" value="1"/>
</dbReference>
<dbReference type="Gene3D" id="2.115.10.20">
    <property type="entry name" value="Glycosyl hydrolase domain, family 43"/>
    <property type="match status" value="1"/>
</dbReference>
<dbReference type="InterPro" id="IPR013320">
    <property type="entry name" value="ConA-like_dom_sf"/>
</dbReference>
<dbReference type="InterPro" id="IPR050551">
    <property type="entry name" value="Fructan_Metab_Enzymes"/>
</dbReference>
<dbReference type="InterPro" id="IPR001362">
    <property type="entry name" value="Glyco_hydro_32"/>
</dbReference>
<dbReference type="InterPro" id="IPR013189">
    <property type="entry name" value="Glyco_hydro_32_C"/>
</dbReference>
<dbReference type="InterPro" id="IPR013148">
    <property type="entry name" value="Glyco_hydro_32_N"/>
</dbReference>
<dbReference type="InterPro" id="IPR023296">
    <property type="entry name" value="Glyco_hydro_beta-prop_sf"/>
</dbReference>
<dbReference type="PANTHER" id="PTHR31953">
    <property type="entry name" value="BETA-FRUCTOFURANOSIDASE, INSOLUBLE ISOENZYME CWINV1-RELATED"/>
    <property type="match status" value="1"/>
</dbReference>
<dbReference type="Pfam" id="PF08244">
    <property type="entry name" value="Glyco_hydro_32C"/>
    <property type="match status" value="1"/>
</dbReference>
<dbReference type="Pfam" id="PF00251">
    <property type="entry name" value="Glyco_hydro_32N"/>
    <property type="match status" value="1"/>
</dbReference>
<dbReference type="SMART" id="SM00640">
    <property type="entry name" value="Glyco_32"/>
    <property type="match status" value="1"/>
</dbReference>
<dbReference type="SUPFAM" id="SSF75005">
    <property type="entry name" value="Arabinanase/levansucrase/invertase"/>
    <property type="match status" value="1"/>
</dbReference>
<dbReference type="SUPFAM" id="SSF49899">
    <property type="entry name" value="Concanavalin A-like lectins/glucanases"/>
    <property type="match status" value="1"/>
</dbReference>
<gene>
    <name evidence="6 7" type="primary">1-FEHw3</name>
</gene>
<organism>
    <name type="scientific">Triticum aestivum</name>
    <name type="common">Wheat</name>
    <dbReference type="NCBI Taxonomy" id="4565"/>
    <lineage>
        <taxon>Eukaryota</taxon>
        <taxon>Viridiplantae</taxon>
        <taxon>Streptophyta</taxon>
        <taxon>Embryophyta</taxon>
        <taxon>Tracheophyta</taxon>
        <taxon>Spermatophyta</taxon>
        <taxon>Magnoliopsida</taxon>
        <taxon>Liliopsida</taxon>
        <taxon>Poales</taxon>
        <taxon>Poaceae</taxon>
        <taxon>BOP clade</taxon>
        <taxon>Pooideae</taxon>
        <taxon>Triticodae</taxon>
        <taxon>Triticeae</taxon>
        <taxon>Triticinae</taxon>
        <taxon>Triticum</taxon>
    </lineage>
</organism>
<protein>
    <recommendedName>
        <fullName evidence="9">Fructan 1-exohydrolase w3</fullName>
        <ecNumber>3.2.1.153</ecNumber>
    </recommendedName>
</protein>
<reference evidence="9" key="1">
    <citation type="journal article" date="2008" name="Mol. Breed.">
        <title>The genome structure of the 1-FEH genes in wheat (Triticum aestivum L.): new markers to track stem carbohydrates and grain filling QTLs in breeding.</title>
        <authorList>
            <person name="Zhang J."/>
            <person name="Huang S."/>
            <person name="Fosu-Nyarko J."/>
            <person name="Dell B."/>
            <person name="McNeil M."/>
            <person name="Waters I."/>
            <person name="Moolhuijzen P."/>
            <person name="Conocono E."/>
            <person name="Appels R."/>
        </authorList>
        <dbReference type="AGRICOLA" id="IND44093987"/>
    </citation>
    <scope>NUCLEOTIDE SEQUENCE [GENOMIC DNA]</scope>
    <source>
        <strain evidence="5">cv. Chinese Spring</strain>
    </source>
</reference>
<reference evidence="8 10" key="2">
    <citation type="journal article" date="2008" name="Physiol. Plantarum">
        <title>Purification, cloning and functional differences of a third fructan 1-exohydrolase (1-FEHw3) from wheat (Triticum aestivum).</title>
        <authorList>
            <person name="Van Riet L."/>
            <person name="Altenbach D."/>
            <person name="Vergauwen R."/>
            <person name="Clerens S."/>
            <person name="Kawakami A."/>
            <person name="Yoshida M."/>
            <person name="Van den Ende W."/>
            <person name="Wiemken A."/>
            <person name="Van Laere A."/>
        </authorList>
    </citation>
    <scope>NUCLEOTIDE SEQUENCE [MRNA]</scope>
    <scope>FUNCTION</scope>
    <scope>CATALYTIC ACTIVITY</scope>
    <scope>ACTIVITY REGULATION</scope>
    <scope>BIOPHYSICOCHEMICAL PROPERTIES</scope>
    <scope>TISSUE SPECIFICITY</scope>
    <source>
        <strain evidence="4">cv. Pajero</strain>
        <tissue evidence="4">Stem</tissue>
    </source>
</reference>
<sequence>MAQAWAFLLPVLVLGSYVTSLFLPTYITGPLCGGDGGGRSLFLCAQAPKDQDPSPASTMYKTAFHFQPAKNWMNDPSGPMYFNGIYHEFYQYNLNGPIFGDIVWGHSVSTDLANWIGLEPALVRDTPSDIDGCWTGSVTILPGGKPIIIYTGGDIDQNQAQNIAFPKNRSDPYLREWIKADNNPVLRPDEPGMNSIEFRDPTTGWIGPDGLWRMAVGGELNGYSAALLYKSEDFLNWTKVDHPLYSHNGSNMWECPDFFAVLPGNNAGLDLSAAIPQGAKHALKMSVDSVDKYMIGVYDLHRDAFVPDNVVDDRRLWLRIDYGTFYASKSFFDPNKNRRIIWGWSRETDSPSDDLAKGWAGLHTIPRTIWLAGDGKQLLQWPVEEIESLRTNEINHQGLELNKGDLFEIKEVDAFQADVEIGFELASIDDADPFDPSWLLDPEKHCGEAGASVPGGIGPFGLVILASDNMDEHTEVYFRVYKSQEKYMVLMCSDLRRSSLRPDLEKPAYGGFFEFDLEKERKISLRTLIDRSAVESFGGGGRVCITSRVYPAVLADVGSAHIYAFNNGGATVRVPQLSAWTMRKAQVNVEKGWSAI</sequence>
<evidence type="ECO:0000250" key="1">
    <source>
        <dbReference type="UniProtKB" id="Q43866"/>
    </source>
</evidence>
<evidence type="ECO:0000250" key="2">
    <source>
        <dbReference type="UniProtKB" id="Q84PN8"/>
    </source>
</evidence>
<evidence type="ECO:0000255" key="3"/>
<evidence type="ECO:0000269" key="4">
    <source>
    </source>
</evidence>
<evidence type="ECO:0000269" key="5">
    <source ref="1"/>
</evidence>
<evidence type="ECO:0000303" key="6">
    <source>
    </source>
</evidence>
<evidence type="ECO:0000303" key="7">
    <source ref="1"/>
</evidence>
<evidence type="ECO:0000305" key="8"/>
<evidence type="ECO:0000312" key="9">
    <source>
        <dbReference type="EMBL" id="ACI16116.1"/>
    </source>
</evidence>
<evidence type="ECO:0000312" key="10">
    <source>
        <dbReference type="EMBL" id="CAD92365.1"/>
    </source>
</evidence>
<accession>B6DZC8</accession>
<accession>Q70LR2</accession>